<evidence type="ECO:0000255" key="1">
    <source>
        <dbReference type="HAMAP-Rule" id="MF_01216"/>
    </source>
</evidence>
<reference key="1">
    <citation type="journal article" date="2003" name="Nature">
        <title>The genome sequence of Bacillus anthracis Ames and comparison to closely related bacteria.</title>
        <authorList>
            <person name="Read T.D."/>
            <person name="Peterson S.N."/>
            <person name="Tourasse N.J."/>
            <person name="Baillie L.W."/>
            <person name="Paulsen I.T."/>
            <person name="Nelson K.E."/>
            <person name="Tettelin H."/>
            <person name="Fouts D.E."/>
            <person name="Eisen J.A."/>
            <person name="Gill S.R."/>
            <person name="Holtzapple E.K."/>
            <person name="Okstad O.A."/>
            <person name="Helgason E."/>
            <person name="Rilstone J."/>
            <person name="Wu M."/>
            <person name="Kolonay J.F."/>
            <person name="Beanan M.J."/>
            <person name="Dodson R.J."/>
            <person name="Brinkac L.M."/>
            <person name="Gwinn M.L."/>
            <person name="DeBoy R.T."/>
            <person name="Madpu R."/>
            <person name="Daugherty S.C."/>
            <person name="Durkin A.S."/>
            <person name="Haft D.H."/>
            <person name="Nelson W.C."/>
            <person name="Peterson J.D."/>
            <person name="Pop M."/>
            <person name="Khouri H.M."/>
            <person name="Radune D."/>
            <person name="Benton J.L."/>
            <person name="Mahamoud Y."/>
            <person name="Jiang L."/>
            <person name="Hance I.R."/>
            <person name="Weidman J.F."/>
            <person name="Berry K.J."/>
            <person name="Plaut R.D."/>
            <person name="Wolf A.M."/>
            <person name="Watkins K.L."/>
            <person name="Nierman W.C."/>
            <person name="Hazen A."/>
            <person name="Cline R.T."/>
            <person name="Redmond C."/>
            <person name="Thwaite J.E."/>
            <person name="White O."/>
            <person name="Salzberg S.L."/>
            <person name="Thomason B."/>
            <person name="Friedlander A.M."/>
            <person name="Koehler T.M."/>
            <person name="Hanna P.C."/>
            <person name="Kolstoe A.-B."/>
            <person name="Fraser C.M."/>
        </authorList>
    </citation>
    <scope>NUCLEOTIDE SEQUENCE [LARGE SCALE GENOMIC DNA]</scope>
    <source>
        <strain>Ames / isolate Porton</strain>
    </source>
</reference>
<reference key="2">
    <citation type="submission" date="2004-01" db="EMBL/GenBank/DDBJ databases">
        <title>Complete genome sequence of Bacillus anthracis Sterne.</title>
        <authorList>
            <person name="Brettin T.S."/>
            <person name="Bruce D."/>
            <person name="Challacombe J.F."/>
            <person name="Gilna P."/>
            <person name="Han C."/>
            <person name="Hill K."/>
            <person name="Hitchcock P."/>
            <person name="Jackson P."/>
            <person name="Keim P."/>
            <person name="Longmire J."/>
            <person name="Lucas S."/>
            <person name="Okinaka R."/>
            <person name="Richardson P."/>
            <person name="Rubin E."/>
            <person name="Tice H."/>
        </authorList>
    </citation>
    <scope>NUCLEOTIDE SEQUENCE [LARGE SCALE GENOMIC DNA]</scope>
    <source>
        <strain>Sterne</strain>
    </source>
</reference>
<reference key="3">
    <citation type="journal article" date="2009" name="J. Bacteriol.">
        <title>The complete genome sequence of Bacillus anthracis Ames 'Ancestor'.</title>
        <authorList>
            <person name="Ravel J."/>
            <person name="Jiang L."/>
            <person name="Stanley S.T."/>
            <person name="Wilson M.R."/>
            <person name="Decker R.S."/>
            <person name="Read T.D."/>
            <person name="Worsham P."/>
            <person name="Keim P.S."/>
            <person name="Salzberg S.L."/>
            <person name="Fraser-Liggett C.M."/>
            <person name="Rasko D.A."/>
        </authorList>
    </citation>
    <scope>NUCLEOTIDE SEQUENCE [LARGE SCALE GENOMIC DNA]</scope>
    <source>
        <strain>Ames ancestor</strain>
    </source>
</reference>
<gene>
    <name evidence="1" type="primary">azoR2</name>
    <name type="ordered locus">BA_1908</name>
    <name type="ordered locus">GBAA_1908</name>
    <name type="ordered locus">BAS1770</name>
</gene>
<feature type="chain" id="PRO_0000245874" description="FMN-dependent NADH:quinone oxidoreductase 2">
    <location>
        <begin position="1"/>
        <end position="208"/>
    </location>
</feature>
<protein>
    <recommendedName>
        <fullName evidence="1">FMN-dependent NADH:quinone oxidoreductase 2</fullName>
        <ecNumber evidence="1">1.6.5.-</ecNumber>
    </recommendedName>
    <alternativeName>
        <fullName evidence="1">Azo-dye reductase 2</fullName>
    </alternativeName>
    <alternativeName>
        <fullName evidence="1">FMN-dependent NADH-azo compound oxidoreductase 2</fullName>
    </alternativeName>
    <alternativeName>
        <fullName evidence="1">FMN-dependent NADH-azoreductase 2</fullName>
        <ecNumber evidence="1">1.7.1.17</ecNumber>
    </alternativeName>
</protein>
<dbReference type="EC" id="1.6.5.-" evidence="1"/>
<dbReference type="EC" id="1.7.1.17" evidence="1"/>
<dbReference type="EMBL" id="AE016879">
    <property type="protein sequence ID" value="AAP25805.1"/>
    <property type="molecule type" value="Genomic_DNA"/>
</dbReference>
<dbReference type="EMBL" id="AE017225">
    <property type="protein sequence ID" value="AAT54085.1"/>
    <property type="molecule type" value="Genomic_DNA"/>
</dbReference>
<dbReference type="EMBL" id="AE017334">
    <property type="protein sequence ID" value="AAT31026.1"/>
    <property type="molecule type" value="Genomic_DNA"/>
</dbReference>
<dbReference type="RefSeq" id="NP_844319.3">
    <property type="nucleotide sequence ID" value="NC_003997.3"/>
</dbReference>
<dbReference type="SMR" id="Q81RX7"/>
<dbReference type="DNASU" id="1087092"/>
<dbReference type="KEGG" id="ban:BA_1908"/>
<dbReference type="KEGG" id="bar:GBAA_1908"/>
<dbReference type="KEGG" id="bat:BAS1770"/>
<dbReference type="PATRIC" id="fig|1392.231.peg.2419"/>
<dbReference type="eggNOG" id="COG1182">
    <property type="taxonomic scope" value="Bacteria"/>
</dbReference>
<dbReference type="HOGENOM" id="CLU_088964_3_1_9"/>
<dbReference type="OMA" id="YTEAGPQ"/>
<dbReference type="Proteomes" id="UP000000427">
    <property type="component" value="Chromosome"/>
</dbReference>
<dbReference type="Proteomes" id="UP000000594">
    <property type="component" value="Chromosome"/>
</dbReference>
<dbReference type="GO" id="GO:0009055">
    <property type="term" value="F:electron transfer activity"/>
    <property type="evidence" value="ECO:0007669"/>
    <property type="project" value="UniProtKB-UniRule"/>
</dbReference>
<dbReference type="GO" id="GO:0010181">
    <property type="term" value="F:FMN binding"/>
    <property type="evidence" value="ECO:0007669"/>
    <property type="project" value="UniProtKB-UniRule"/>
</dbReference>
<dbReference type="GO" id="GO:0016652">
    <property type="term" value="F:oxidoreductase activity, acting on NAD(P)H as acceptor"/>
    <property type="evidence" value="ECO:0007669"/>
    <property type="project" value="UniProtKB-UniRule"/>
</dbReference>
<dbReference type="GO" id="GO:0016655">
    <property type="term" value="F:oxidoreductase activity, acting on NAD(P)H, quinone or similar compound as acceptor"/>
    <property type="evidence" value="ECO:0007669"/>
    <property type="project" value="InterPro"/>
</dbReference>
<dbReference type="Gene3D" id="3.40.50.360">
    <property type="match status" value="1"/>
</dbReference>
<dbReference type="HAMAP" id="MF_01216">
    <property type="entry name" value="Azoreductase_type1"/>
    <property type="match status" value="1"/>
</dbReference>
<dbReference type="InterPro" id="IPR003680">
    <property type="entry name" value="Flavodoxin_fold"/>
</dbReference>
<dbReference type="InterPro" id="IPR029039">
    <property type="entry name" value="Flavoprotein-like_sf"/>
</dbReference>
<dbReference type="InterPro" id="IPR050104">
    <property type="entry name" value="FMN-dep_NADH:Q_OxRdtase_AzoR1"/>
</dbReference>
<dbReference type="InterPro" id="IPR023048">
    <property type="entry name" value="NADH:quinone_OxRdtase_FMN_depd"/>
</dbReference>
<dbReference type="NCBIfam" id="NF010074">
    <property type="entry name" value="PRK13555.1"/>
    <property type="match status" value="1"/>
</dbReference>
<dbReference type="NCBIfam" id="NF010075">
    <property type="entry name" value="PRK13556.1"/>
    <property type="match status" value="1"/>
</dbReference>
<dbReference type="PANTHER" id="PTHR43741">
    <property type="entry name" value="FMN-DEPENDENT NADH-AZOREDUCTASE 1"/>
    <property type="match status" value="1"/>
</dbReference>
<dbReference type="PANTHER" id="PTHR43741:SF4">
    <property type="entry name" value="FMN-DEPENDENT NADH:QUINONE OXIDOREDUCTASE"/>
    <property type="match status" value="1"/>
</dbReference>
<dbReference type="Pfam" id="PF02525">
    <property type="entry name" value="Flavodoxin_2"/>
    <property type="match status" value="1"/>
</dbReference>
<dbReference type="SUPFAM" id="SSF52218">
    <property type="entry name" value="Flavoproteins"/>
    <property type="match status" value="1"/>
</dbReference>
<organism>
    <name type="scientific">Bacillus anthracis</name>
    <dbReference type="NCBI Taxonomy" id="1392"/>
    <lineage>
        <taxon>Bacteria</taxon>
        <taxon>Bacillati</taxon>
        <taxon>Bacillota</taxon>
        <taxon>Bacilli</taxon>
        <taxon>Bacillales</taxon>
        <taxon>Bacillaceae</taxon>
        <taxon>Bacillus</taxon>
        <taxon>Bacillus cereus group</taxon>
    </lineage>
</organism>
<sequence>MSKVLFVKANDRPAEQAVSSKMYETFVTTYKEANPNTEITELDLFALDLPYYGNIAISGGYKRSQGMELTAEEEKAVATVDQYLNQFLEADKVVFAFPLWNFTVPAPLITYISYLSQAGKTFKYTANGPEGLAGGKKVVVLGARGSDYSSEQMAPMEMAVNYVTTVLGFWGITNPETVVIEGHNQYPDRSQQIVEEGLENVKKVAAKF</sequence>
<name>AZOR2_BACAN</name>
<accession>Q81RX7</accession>
<accession>Q6I054</accession>
<accession>Q6KU32</accession>
<keyword id="KW-0285">Flavoprotein</keyword>
<keyword id="KW-0288">FMN</keyword>
<keyword id="KW-0520">NAD</keyword>
<keyword id="KW-0560">Oxidoreductase</keyword>
<keyword id="KW-1185">Reference proteome</keyword>
<comment type="function">
    <text evidence="1">Quinone reductase that provides resistance to thiol-specific stress caused by electrophilic quinones.</text>
</comment>
<comment type="function">
    <text evidence="1">Also exhibits azoreductase activity. Catalyzes the reductive cleavage of the azo bond in aromatic azo compounds to the corresponding amines.</text>
</comment>
<comment type="catalytic activity">
    <reaction evidence="1">
        <text>2 a quinone + NADH + H(+) = 2 a 1,4-benzosemiquinone + NAD(+)</text>
        <dbReference type="Rhea" id="RHEA:65952"/>
        <dbReference type="ChEBI" id="CHEBI:15378"/>
        <dbReference type="ChEBI" id="CHEBI:57540"/>
        <dbReference type="ChEBI" id="CHEBI:57945"/>
        <dbReference type="ChEBI" id="CHEBI:132124"/>
        <dbReference type="ChEBI" id="CHEBI:134225"/>
    </reaction>
</comment>
<comment type="catalytic activity">
    <reaction evidence="1">
        <text>N,N-dimethyl-1,4-phenylenediamine + anthranilate + 2 NAD(+) = 2-(4-dimethylaminophenyl)diazenylbenzoate + 2 NADH + 2 H(+)</text>
        <dbReference type="Rhea" id="RHEA:55872"/>
        <dbReference type="ChEBI" id="CHEBI:15378"/>
        <dbReference type="ChEBI" id="CHEBI:15783"/>
        <dbReference type="ChEBI" id="CHEBI:16567"/>
        <dbReference type="ChEBI" id="CHEBI:57540"/>
        <dbReference type="ChEBI" id="CHEBI:57945"/>
        <dbReference type="ChEBI" id="CHEBI:71579"/>
        <dbReference type="EC" id="1.7.1.17"/>
    </reaction>
</comment>
<comment type="cofactor">
    <cofactor evidence="1">
        <name>FMN</name>
        <dbReference type="ChEBI" id="CHEBI:58210"/>
    </cofactor>
    <text evidence="1">Binds 1 FMN per subunit.</text>
</comment>
<comment type="subunit">
    <text evidence="1">Homodimer.</text>
</comment>
<comment type="similarity">
    <text evidence="1">Belongs to the azoreductase type 1 family.</text>
</comment>
<proteinExistence type="inferred from homology"/>